<evidence type="ECO:0000250" key="1">
    <source>
        <dbReference type="UniProtKB" id="Q9UBT6"/>
    </source>
</evidence>
<evidence type="ECO:0000255" key="2">
    <source>
        <dbReference type="PROSITE-ProRule" id="PRU00216"/>
    </source>
</evidence>
<evidence type="ECO:0000255" key="3">
    <source>
        <dbReference type="PROSITE-ProRule" id="PRU00768"/>
    </source>
</evidence>
<evidence type="ECO:0000255" key="4">
    <source>
        <dbReference type="PROSITE-ProRule" id="PRU01255"/>
    </source>
</evidence>
<evidence type="ECO:0000256" key="5">
    <source>
        <dbReference type="SAM" id="MobiDB-lite"/>
    </source>
</evidence>
<evidence type="ECO:0000269" key="6">
    <source>
    </source>
</evidence>
<evidence type="ECO:0000269" key="7">
    <source>
    </source>
</evidence>
<evidence type="ECO:0000303" key="8">
    <source>
    </source>
</evidence>
<evidence type="ECO:0000305" key="9"/>
<evidence type="ECO:0000312" key="10">
    <source>
        <dbReference type="Araport" id="AT1G49980"/>
    </source>
</evidence>
<evidence type="ECO:0000312" key="11">
    <source>
        <dbReference type="EMBL" id="AAF76444.1"/>
    </source>
</evidence>
<gene>
    <name evidence="8" type="primary">POLK</name>
    <name evidence="10" type="ordered locus">At1g49980</name>
    <name evidence="11" type="ORF">F2J10.13</name>
</gene>
<name>POLK_ARATH</name>
<dbReference type="EC" id="2.7.7.7" evidence="6 7"/>
<dbReference type="EMBL" id="AY508701">
    <property type="protein sequence ID" value="AAS91582.1"/>
    <property type="molecule type" value="mRNA"/>
</dbReference>
<dbReference type="EMBL" id="AC015445">
    <property type="protein sequence ID" value="AAF76444.1"/>
    <property type="status" value="ALT_SEQ"/>
    <property type="molecule type" value="Genomic_DNA"/>
</dbReference>
<dbReference type="EMBL" id="CP002684">
    <property type="protein sequence ID" value="AEE32503.1"/>
    <property type="molecule type" value="Genomic_DNA"/>
</dbReference>
<dbReference type="EMBL" id="CP002684">
    <property type="protein sequence ID" value="ANM58190.1"/>
    <property type="molecule type" value="Genomic_DNA"/>
</dbReference>
<dbReference type="EMBL" id="CP002684">
    <property type="protein sequence ID" value="ANM58192.1"/>
    <property type="molecule type" value="Genomic_DNA"/>
</dbReference>
<dbReference type="EMBL" id="CP002684">
    <property type="protein sequence ID" value="ANM58193.1"/>
    <property type="molecule type" value="Genomic_DNA"/>
</dbReference>
<dbReference type="EMBL" id="CP002684">
    <property type="protein sequence ID" value="ANM58196.1"/>
    <property type="molecule type" value="Genomic_DNA"/>
</dbReference>
<dbReference type="EMBL" id="AK221284">
    <property type="protein sequence ID" value="BAD93992.1"/>
    <property type="molecule type" value="mRNA"/>
</dbReference>
<dbReference type="PIR" id="C96536">
    <property type="entry name" value="C96536"/>
</dbReference>
<dbReference type="RefSeq" id="NP_001320644.1">
    <molecule id="Q6JDV7-3"/>
    <property type="nucleotide sequence ID" value="NM_001333412.1"/>
</dbReference>
<dbReference type="RefSeq" id="NP_001320646.1">
    <molecule id="Q6JDV7-3"/>
    <property type="nucleotide sequence ID" value="NM_001333409.1"/>
</dbReference>
<dbReference type="RefSeq" id="NP_001320647.1">
    <molecule id="Q6JDV7-3"/>
    <property type="nucleotide sequence ID" value="NM_001333410.1"/>
</dbReference>
<dbReference type="RefSeq" id="NP_001320650.1">
    <molecule id="Q6JDV7-3"/>
    <property type="nucleotide sequence ID" value="NM_001333413.1"/>
</dbReference>
<dbReference type="RefSeq" id="NP_175420.3">
    <molecule id="Q6JDV7-1"/>
    <property type="nucleotide sequence ID" value="NM_103886.4"/>
</dbReference>
<dbReference type="SMR" id="Q6JDV7"/>
<dbReference type="FunCoup" id="Q6JDV7">
    <property type="interactions" value="3087"/>
</dbReference>
<dbReference type="STRING" id="3702.Q6JDV7"/>
<dbReference type="iPTMnet" id="Q6JDV7"/>
<dbReference type="PaxDb" id="3702-AT1G49980.1"/>
<dbReference type="EnsemblPlants" id="AT1G49980.1">
    <molecule id="Q6JDV7-1"/>
    <property type="protein sequence ID" value="AT1G49980.1"/>
    <property type="gene ID" value="AT1G49980"/>
</dbReference>
<dbReference type="EnsemblPlants" id="AT1G49980.4">
    <molecule id="Q6JDV7-3"/>
    <property type="protein sequence ID" value="AT1G49980.4"/>
    <property type="gene ID" value="AT1G49980"/>
</dbReference>
<dbReference type="EnsemblPlants" id="AT1G49980.5">
    <molecule id="Q6JDV7-3"/>
    <property type="protein sequence ID" value="AT1G49980.5"/>
    <property type="gene ID" value="AT1G49980"/>
</dbReference>
<dbReference type="EnsemblPlants" id="AT1G49980.7">
    <molecule id="Q6JDV7-3"/>
    <property type="protein sequence ID" value="AT1G49980.7"/>
    <property type="gene ID" value="AT1G49980"/>
</dbReference>
<dbReference type="EnsemblPlants" id="AT1G49980.8">
    <molecule id="Q6JDV7-3"/>
    <property type="protein sequence ID" value="AT1G49980.8"/>
    <property type="gene ID" value="AT1G49980"/>
</dbReference>
<dbReference type="GeneID" id="841422"/>
<dbReference type="Gramene" id="AT1G49980.1">
    <molecule id="Q6JDV7-1"/>
    <property type="protein sequence ID" value="AT1G49980.1"/>
    <property type="gene ID" value="AT1G49980"/>
</dbReference>
<dbReference type="Gramene" id="AT1G49980.4">
    <molecule id="Q6JDV7-3"/>
    <property type="protein sequence ID" value="AT1G49980.4"/>
    <property type="gene ID" value="AT1G49980"/>
</dbReference>
<dbReference type="Gramene" id="AT1G49980.5">
    <molecule id="Q6JDV7-3"/>
    <property type="protein sequence ID" value="AT1G49980.5"/>
    <property type="gene ID" value="AT1G49980"/>
</dbReference>
<dbReference type="Gramene" id="AT1G49980.7">
    <molecule id="Q6JDV7-3"/>
    <property type="protein sequence ID" value="AT1G49980.7"/>
    <property type="gene ID" value="AT1G49980"/>
</dbReference>
<dbReference type="Gramene" id="AT1G49980.8">
    <molecule id="Q6JDV7-3"/>
    <property type="protein sequence ID" value="AT1G49980.8"/>
    <property type="gene ID" value="AT1G49980"/>
</dbReference>
<dbReference type="KEGG" id="ath:AT1G49980"/>
<dbReference type="Araport" id="AT1G49980"/>
<dbReference type="TAIR" id="AT1G49980"/>
<dbReference type="eggNOG" id="KOG2094">
    <property type="taxonomic scope" value="Eukaryota"/>
</dbReference>
<dbReference type="HOGENOM" id="CLU_012348_11_1_1"/>
<dbReference type="InParanoid" id="Q6JDV7"/>
<dbReference type="PhylomeDB" id="Q6JDV7"/>
<dbReference type="PRO" id="PR:Q6JDV7"/>
<dbReference type="Proteomes" id="UP000006548">
    <property type="component" value="Chromosome 1"/>
</dbReference>
<dbReference type="ExpressionAtlas" id="Q6JDV7">
    <property type="expression patterns" value="baseline and differential"/>
</dbReference>
<dbReference type="GO" id="GO:0005634">
    <property type="term" value="C:nucleus"/>
    <property type="evidence" value="ECO:0007669"/>
    <property type="project" value="UniProtKB-SubCell"/>
</dbReference>
<dbReference type="GO" id="GO:0003684">
    <property type="term" value="F:damaged DNA binding"/>
    <property type="evidence" value="ECO:0007669"/>
    <property type="project" value="InterPro"/>
</dbReference>
<dbReference type="GO" id="GO:0003887">
    <property type="term" value="F:DNA-directed DNA polymerase activity"/>
    <property type="evidence" value="ECO:0000314"/>
    <property type="project" value="UniProtKB"/>
</dbReference>
<dbReference type="GO" id="GO:0003697">
    <property type="term" value="F:single-stranded DNA binding"/>
    <property type="evidence" value="ECO:0000314"/>
    <property type="project" value="UniProtKB"/>
</dbReference>
<dbReference type="GO" id="GO:0008270">
    <property type="term" value="F:zinc ion binding"/>
    <property type="evidence" value="ECO:0007669"/>
    <property type="project" value="UniProtKB-KW"/>
</dbReference>
<dbReference type="GO" id="GO:0006281">
    <property type="term" value="P:DNA repair"/>
    <property type="evidence" value="ECO:0000314"/>
    <property type="project" value="UniProtKB"/>
</dbReference>
<dbReference type="GO" id="GO:0006260">
    <property type="term" value="P:DNA replication"/>
    <property type="evidence" value="ECO:0007669"/>
    <property type="project" value="UniProtKB-KW"/>
</dbReference>
<dbReference type="CDD" id="cd03586">
    <property type="entry name" value="PolY_Pol_IV_kappa"/>
    <property type="match status" value="1"/>
</dbReference>
<dbReference type="FunFam" id="3.30.1490.100:FF:000004">
    <property type="entry name" value="DNA polymerase IV"/>
    <property type="match status" value="1"/>
</dbReference>
<dbReference type="FunFam" id="1.10.150.810:FF:000001">
    <property type="entry name" value="DNA polymerase kappa"/>
    <property type="match status" value="1"/>
</dbReference>
<dbReference type="FunFam" id="1.10.150.810:FF:000003">
    <property type="entry name" value="DNA polymerase kappa subunit"/>
    <property type="match status" value="1"/>
</dbReference>
<dbReference type="FunFam" id="3.30.70.270:FF:000014">
    <property type="entry name" value="DNA polymerase kappa subunit"/>
    <property type="match status" value="1"/>
</dbReference>
<dbReference type="FunFam" id="3.40.1170.60:FF:000002">
    <property type="entry name" value="Polymerase (DNA directed) kappa"/>
    <property type="match status" value="1"/>
</dbReference>
<dbReference type="Gene3D" id="1.10.150.810">
    <property type="match status" value="2"/>
</dbReference>
<dbReference type="Gene3D" id="3.30.70.270">
    <property type="match status" value="1"/>
</dbReference>
<dbReference type="Gene3D" id="3.40.1170.60">
    <property type="match status" value="1"/>
</dbReference>
<dbReference type="Gene3D" id="3.30.1490.100">
    <property type="entry name" value="DNA polymerase, Y-family, little finger domain"/>
    <property type="match status" value="1"/>
</dbReference>
<dbReference type="HAMAP" id="MF_01113">
    <property type="entry name" value="DNApol_IV"/>
    <property type="match status" value="1"/>
</dbReference>
<dbReference type="InterPro" id="IPR043502">
    <property type="entry name" value="DNA/RNA_pol_sf"/>
</dbReference>
<dbReference type="InterPro" id="IPR036775">
    <property type="entry name" value="DNA_pol_Y-fam_lit_finger_sf"/>
</dbReference>
<dbReference type="InterPro" id="IPR017961">
    <property type="entry name" value="DNA_pol_Y-fam_little_finger"/>
</dbReference>
<dbReference type="InterPro" id="IPR050116">
    <property type="entry name" value="DNA_polymerase-Y"/>
</dbReference>
<dbReference type="InterPro" id="IPR022880">
    <property type="entry name" value="DNApol_IV"/>
</dbReference>
<dbReference type="InterPro" id="IPR043128">
    <property type="entry name" value="Rev_trsase/Diguanyl_cyclase"/>
</dbReference>
<dbReference type="InterPro" id="IPR041298">
    <property type="entry name" value="UBZ3"/>
</dbReference>
<dbReference type="InterPro" id="IPR001126">
    <property type="entry name" value="UmuC"/>
</dbReference>
<dbReference type="NCBIfam" id="NF002677">
    <property type="entry name" value="PRK02406.1"/>
    <property type="match status" value="1"/>
</dbReference>
<dbReference type="PANTHER" id="PTHR11076:SF33">
    <property type="entry name" value="DNA POLYMERASE KAPPA"/>
    <property type="match status" value="1"/>
</dbReference>
<dbReference type="PANTHER" id="PTHR11076">
    <property type="entry name" value="DNA REPAIR POLYMERASE UMUC / TRANSFERASE FAMILY MEMBER"/>
    <property type="match status" value="1"/>
</dbReference>
<dbReference type="Pfam" id="PF00817">
    <property type="entry name" value="IMS"/>
    <property type="match status" value="1"/>
</dbReference>
<dbReference type="Pfam" id="PF11799">
    <property type="entry name" value="IMS_C"/>
    <property type="match status" value="1"/>
</dbReference>
<dbReference type="Pfam" id="PF18439">
    <property type="entry name" value="zf_UBZ"/>
    <property type="match status" value="1"/>
</dbReference>
<dbReference type="PIRSF" id="PIRSF036603">
    <property type="entry name" value="DPol_eta"/>
    <property type="match status" value="1"/>
</dbReference>
<dbReference type="SUPFAM" id="SSF56672">
    <property type="entry name" value="DNA/RNA polymerases"/>
    <property type="match status" value="1"/>
</dbReference>
<dbReference type="SUPFAM" id="SSF100879">
    <property type="entry name" value="Lesion bypass DNA polymerase (Y-family), little finger domain"/>
    <property type="match status" value="1"/>
</dbReference>
<dbReference type="PROSITE" id="PS50173">
    <property type="entry name" value="UMUC"/>
    <property type="match status" value="1"/>
</dbReference>
<dbReference type="PROSITE" id="PS51907">
    <property type="entry name" value="ZF_UBZ3"/>
    <property type="match status" value="1"/>
</dbReference>
<reference key="1">
    <citation type="journal article" date="2004" name="Plant J.">
        <title>Arabidopsis thaliana AtPOLK encodes a DinB-like DNA polymerase that extends mispaired primer termini and is highly expressed in a variety of tissues.</title>
        <authorList>
            <person name="Garcia-Ortiz M.V."/>
            <person name="Ariza R.R."/>
            <person name="Hoffman P.D."/>
            <person name="Hays J.B."/>
            <person name="Roldan-Arjona T."/>
        </authorList>
    </citation>
    <scope>NUCLEOTIDE SEQUENCE [MRNA] (ISOFORM 1)</scope>
    <scope>ALTERNATIVE SPLICING</scope>
    <scope>FUNCTION</scope>
    <scope>MUTAGENESIS OF ASP-200; GLU-201 AND 479-ASN--LYS-671</scope>
    <scope>TISSUE SPECIFICITY</scope>
    <scope>DEVELOPMENTAL STAGE</scope>
    <scope>CATALYTIC ACTIVITY</scope>
    <source>
        <strain>cv. Columbia</strain>
    </source>
</reference>
<reference key="2">
    <citation type="journal article" date="2000" name="Nature">
        <title>Sequence and analysis of chromosome 1 of the plant Arabidopsis thaliana.</title>
        <authorList>
            <person name="Theologis A."/>
            <person name="Ecker J.R."/>
            <person name="Palm C.J."/>
            <person name="Federspiel N.A."/>
            <person name="Kaul S."/>
            <person name="White O."/>
            <person name="Alonso J."/>
            <person name="Altafi H."/>
            <person name="Araujo R."/>
            <person name="Bowman C.L."/>
            <person name="Brooks S.Y."/>
            <person name="Buehler E."/>
            <person name="Chan A."/>
            <person name="Chao Q."/>
            <person name="Chen H."/>
            <person name="Cheuk R.F."/>
            <person name="Chin C.W."/>
            <person name="Chung M.K."/>
            <person name="Conn L."/>
            <person name="Conway A.B."/>
            <person name="Conway A.R."/>
            <person name="Creasy T.H."/>
            <person name="Dewar K."/>
            <person name="Dunn P."/>
            <person name="Etgu P."/>
            <person name="Feldblyum T.V."/>
            <person name="Feng J.-D."/>
            <person name="Fong B."/>
            <person name="Fujii C.Y."/>
            <person name="Gill J.E."/>
            <person name="Goldsmith A.D."/>
            <person name="Haas B."/>
            <person name="Hansen N.F."/>
            <person name="Hughes B."/>
            <person name="Huizar L."/>
            <person name="Hunter J.L."/>
            <person name="Jenkins J."/>
            <person name="Johnson-Hopson C."/>
            <person name="Khan S."/>
            <person name="Khaykin E."/>
            <person name="Kim C.J."/>
            <person name="Koo H.L."/>
            <person name="Kremenetskaia I."/>
            <person name="Kurtz D.B."/>
            <person name="Kwan A."/>
            <person name="Lam B."/>
            <person name="Langin-Hooper S."/>
            <person name="Lee A."/>
            <person name="Lee J.M."/>
            <person name="Lenz C.A."/>
            <person name="Li J.H."/>
            <person name="Li Y.-P."/>
            <person name="Lin X."/>
            <person name="Liu S.X."/>
            <person name="Liu Z.A."/>
            <person name="Luros J.S."/>
            <person name="Maiti R."/>
            <person name="Marziali A."/>
            <person name="Militscher J."/>
            <person name="Miranda M."/>
            <person name="Nguyen M."/>
            <person name="Nierman W.C."/>
            <person name="Osborne B.I."/>
            <person name="Pai G."/>
            <person name="Peterson J."/>
            <person name="Pham P.K."/>
            <person name="Rizzo M."/>
            <person name="Rooney T."/>
            <person name="Rowley D."/>
            <person name="Sakano H."/>
            <person name="Salzberg S.L."/>
            <person name="Schwartz J.R."/>
            <person name="Shinn P."/>
            <person name="Southwick A.M."/>
            <person name="Sun H."/>
            <person name="Tallon L.J."/>
            <person name="Tambunga G."/>
            <person name="Toriumi M.J."/>
            <person name="Town C.D."/>
            <person name="Utterback T."/>
            <person name="Van Aken S."/>
            <person name="Vaysberg M."/>
            <person name="Vysotskaia V.S."/>
            <person name="Walker M."/>
            <person name="Wu D."/>
            <person name="Yu G."/>
            <person name="Fraser C.M."/>
            <person name="Venter J.C."/>
            <person name="Davis R.W."/>
        </authorList>
    </citation>
    <scope>NUCLEOTIDE SEQUENCE [LARGE SCALE GENOMIC DNA]</scope>
    <source>
        <strain>cv. Columbia</strain>
    </source>
</reference>
<reference key="3">
    <citation type="journal article" date="2017" name="Plant J.">
        <title>Araport11: a complete reannotation of the Arabidopsis thaliana reference genome.</title>
        <authorList>
            <person name="Cheng C.Y."/>
            <person name="Krishnakumar V."/>
            <person name="Chan A.P."/>
            <person name="Thibaud-Nissen F."/>
            <person name="Schobel S."/>
            <person name="Town C.D."/>
        </authorList>
    </citation>
    <scope>GENOME REANNOTATION</scope>
    <source>
        <strain>cv. Columbia</strain>
    </source>
</reference>
<reference key="4">
    <citation type="submission" date="2005-03" db="EMBL/GenBank/DDBJ databases">
        <title>Large-scale analysis of RIKEN Arabidopsis full-length (RAFL) cDNAs.</title>
        <authorList>
            <person name="Totoki Y."/>
            <person name="Seki M."/>
            <person name="Ishida J."/>
            <person name="Nakajima M."/>
            <person name="Enju A."/>
            <person name="Kamiya A."/>
            <person name="Narusaka M."/>
            <person name="Shin-i T."/>
            <person name="Nakagawa M."/>
            <person name="Sakamoto N."/>
            <person name="Oishi K."/>
            <person name="Kohara Y."/>
            <person name="Kobayashi M."/>
            <person name="Toyoda A."/>
            <person name="Sakaki Y."/>
            <person name="Sakurai T."/>
            <person name="Iida K."/>
            <person name="Akiyama K."/>
            <person name="Satou M."/>
            <person name="Toyoda T."/>
            <person name="Konagaya A."/>
            <person name="Carninci P."/>
            <person name="Kawai J."/>
            <person name="Hayashizaki Y."/>
            <person name="Shinozaki K."/>
        </authorList>
    </citation>
    <scope>NUCLEOTIDE SEQUENCE [LARGE SCALE MRNA] (ISOFORM 2)</scope>
    <source>
        <strain>cv. Columbia</strain>
    </source>
</reference>
<reference key="5">
    <citation type="journal article" date="2005" name="Environ. Mol. Mutagen.">
        <title>Components of nucleotide excision repair and DNA damage tolerance in Arabidopsis thaliana.</title>
        <authorList>
            <person name="Kunz B.A."/>
            <person name="Anderson H.J."/>
            <person name="Osmond M.J."/>
            <person name="Vonarx E.J."/>
        </authorList>
    </citation>
    <scope>REVIEW ON DNA DAMAGE REPAIR</scope>
</reference>
<reference key="6">
    <citation type="journal article" date="2007" name="FEBS J.">
        <title>The noncatalytic C-terminus of AtPOLK Y-family DNA polymerase affects synthesis fidelity, mismatch extension and translesion replication.</title>
        <authorList>
            <person name="Garcia-Ortiz M.V."/>
            <person name="Roldan-Arjona T."/>
            <person name="Ariza R.R."/>
        </authorList>
    </citation>
    <scope>FUNCTION</scope>
    <scope>MUTAGENESIS OF 479-ASN--LYS-671</scope>
    <scope>BIOPHYSICOCHEMICAL PROPERTIES</scope>
    <scope>CATALYTIC ACTIVITY</scope>
    <scope>ACTIVITY REGULATION</scope>
</reference>
<organism>
    <name type="scientific">Arabidopsis thaliana</name>
    <name type="common">Mouse-ear cress</name>
    <dbReference type="NCBI Taxonomy" id="3702"/>
    <lineage>
        <taxon>Eukaryota</taxon>
        <taxon>Viridiplantae</taxon>
        <taxon>Streptophyta</taxon>
        <taxon>Embryophyta</taxon>
        <taxon>Tracheophyta</taxon>
        <taxon>Spermatophyta</taxon>
        <taxon>Magnoliopsida</taxon>
        <taxon>eudicotyledons</taxon>
        <taxon>Gunneridae</taxon>
        <taxon>Pentapetalae</taxon>
        <taxon>rosids</taxon>
        <taxon>malvids</taxon>
        <taxon>Brassicales</taxon>
        <taxon>Brassicaceae</taxon>
        <taxon>Camelineae</taxon>
        <taxon>Arabidopsis</taxon>
    </lineage>
</organism>
<protein>
    <recommendedName>
        <fullName evidence="8">DNA polymerase kappa</fullName>
        <shortName evidence="8">AtPOLK</shortName>
        <ecNumber evidence="6 7">2.7.7.7</ecNumber>
    </recommendedName>
</protein>
<sequence>MDNGESSSTNNSSRPWESYNTVFTNAKAGMEGVDKEKVQRVVYEMSKGSKYFQNEERKEALMKQKIEHMRDRCAKLSSLDLSNYQKVVDKRILELEATRDLSRIWLHVDMDAFYAAVETLSDPSIKGKPMAVGGLSMISTANYEARKFGVRAAMPGFIARKLCPDLIFVPVDFTKYTHYSDLTRKVFRNYDPHFIAGSLDEAYLDITEVCRERGLSGGEIAEELRSSVYSETGLTCSAGVAANRLLAKVCSDINKPNGQFVLQNDRSTVMTFVSFLPVRKIGGIGKVTEHILKDALGIKTCEEMVQKGSLLYALFSQSSADFFLSVGLGLGGTNTPQVRSRKSISSERTFAATGDERLLYSKLDELAEMLSHDMKKEGLTARTLTLKLKTASFEIRSRAVSLQRYTCSSDDILKHATKLLKAELPVSVRLIGLRMSQFVEEIRNSDPSQGTITKFIVQKDSSRQAQDLDDNDSFDLDANKNCLSNDESGNVSFGSHETSSAHLKDVVEYEERSQIDSGKVIPNQECMKKEERLQILEGDSLLKKYKECKPDTSHSMNDNSNATEAVSVFPQTEPLYWIDGYKCVLCGIELPPSFVEERQEHSDFHLAQRLQNEETGSSSSTTPSKRRILGKEKVNSKPKKQKPDQKDSSKHIPIHAFFTKSNQNSNETQRK</sequence>
<comment type="function">
    <text evidence="1 6 7">Template-directed low-fidelity DNA polymerase specifically involved in DNA repair (PubMed:15200644, PubMed:17550419). Able to extend primer-terminal mispairs, and to insert nucleotides opposite to a single 7,8-dihydro-8-oxoGuanine (8-oxoG) lesion and moderately extend from the resulting primer end, thus leading to both error-free and error-prone bypass of 8-oxoG DNA lesions (PubMed:17550419). Probably involved in consecutive DNA replication cycles in the absence of mitosis (PubMed:15200644). Binds preferentially template-primer DNA substrates or single-stranded DNA (PubMed:17550419). Plays an important role in translesion synthesis, where the normal high-fidelity DNA polymerases cannot proceed and DNA synthesis stalls. Depending on the context, it inserts the correct base, but causes frequent base transitions, transversions and frameshifts (By similarity).</text>
</comment>
<comment type="catalytic activity">
    <reaction evidence="6 7">
        <text>DNA(n) + a 2'-deoxyribonucleoside 5'-triphosphate = DNA(n+1) + diphosphate</text>
        <dbReference type="Rhea" id="RHEA:22508"/>
        <dbReference type="Rhea" id="RHEA-COMP:17339"/>
        <dbReference type="Rhea" id="RHEA-COMP:17340"/>
        <dbReference type="ChEBI" id="CHEBI:33019"/>
        <dbReference type="ChEBI" id="CHEBI:61560"/>
        <dbReference type="ChEBI" id="CHEBI:173112"/>
        <dbReference type="EC" id="2.7.7.7"/>
    </reaction>
</comment>
<comment type="cofactor">
    <cofactor evidence="1">
        <name>Mg(2+)</name>
        <dbReference type="ChEBI" id="CHEBI:18420"/>
    </cofactor>
</comment>
<comment type="activity regulation">
    <text evidence="7">Unable to bypass a single 1,N(6)-ethenoadenine (epsilon-dA) or an abasic site lesions in DNA templates.</text>
</comment>
<comment type="biophysicochemical properties">
    <kinetics>
        <KM evidence="7">52.6 uM for dATP (with cytosine as template)</KM>
        <KM evidence="7">12.51 uM for dGTP (with cytosine as template)</KM>
        <KM evidence="7">83.3 uM for dTTP (with cytosine as template)</KM>
        <KM evidence="7">156.8 uM for dCTP (with cytosine as template)</KM>
        <KM evidence="7">2.61 uM for dATP (with thymine as template)</KM>
        <KM evidence="7">62.29 uM for dCTP (with thymine as template)</KM>
        <KM evidence="7">4.7 uM for dTTP (with adenine as template)</KM>
        <KM evidence="7">100.41 uM for dCTP (with adenine as template)</KM>
        <KM evidence="7">29.16 uM for dTTP (with guanine as template)</KM>
        <KM evidence="7">7.76 uM for dCTP (with guanine as template)</KM>
        <text evidence="7">With cytosine as template, kcat is 0.024 min(-1) with dATP as substrate, kcat is 0.125 min(-1) with dGTP as substrate, kcat is 0.057 min(-1) with dATTP as substrate and kcat is 0.0038 min(-1) with dCTP as substrate. With thymine as template, kcat is 0.157 min(-1) with dATP as substrate and kcat is 0.038 min(-1) with dCTP as substrate. With adenine as template, kcat is 0.207 min(-1) with dTTP as substrate and kcat is 0.045 min(-1) with dCTP as substrate. With guanine as template, kcat is 0.022 min(-1) with dTTP as substrate and kcat is 0.061 min(-1) with dCTP as substrate.</text>
    </kinetics>
</comment>
<comment type="subcellular location">
    <subcellularLocation>
        <location evidence="1 3">Nucleus</location>
    </subcellularLocation>
    <text evidence="1">Detected throughout the nucleus and at replication foci.</text>
</comment>
<comment type="alternative products">
    <event type="alternative splicing"/>
    <isoform>
        <id>Q6JDV7-1</id>
        <name>1</name>
        <name evidence="8">AtPOLKa</name>
        <sequence type="displayed"/>
    </isoform>
    <isoform>
        <id>Q6JDV7-2</id>
        <name>2</name>
        <sequence type="described" ref="VSP_059052"/>
    </isoform>
    <isoform>
        <id>Q6JDV7-3</id>
        <name>3</name>
        <sequence type="described" ref="VSP_059053"/>
    </isoform>
    <text evidence="6 10">Additional isoforms seem to exist.</text>
</comment>
<comment type="tissue specificity">
    <text evidence="6">Expressed in roots, leaves, stems, flowers and siliques. Present in endoreduplicating cells.</text>
</comment>
<comment type="developmental stage">
    <text evidence="6">In young seedlings, strongly expressed in cotyledons, and, at lower levels, in the hypocotyl adjacent region. Later confined to cotyledons vascular tissues and observed in leaf primordia and young growing leaves. Accumulates in the basal part of trichomes. In mature flowers, present in sepals, stamen filaments and stigma. Accumulates progressively in maturating siliques.</text>
</comment>
<comment type="domain">
    <text evidence="7">The C-terminal region negatively affects catalytic efficiency for correct nucleotide insertion, thus decreasing the fidelity of the enzyme.</text>
</comment>
<comment type="similarity">
    <text evidence="9">Belongs to the DNA polymerase type-Y family.</text>
</comment>
<comment type="sequence caution" evidence="9">
    <conflict type="erroneous gene model prediction">
        <sequence resource="EMBL-CDS" id="AAF76444"/>
    </conflict>
</comment>
<keyword id="KW-0025">Alternative splicing</keyword>
<keyword id="KW-0227">DNA damage</keyword>
<keyword id="KW-0234">DNA repair</keyword>
<keyword id="KW-0235">DNA replication</keyword>
<keyword id="KW-0238">DNA-binding</keyword>
<keyword id="KW-0239">DNA-directed DNA polymerase</keyword>
<keyword id="KW-0460">Magnesium</keyword>
<keyword id="KW-0479">Metal-binding</keyword>
<keyword id="KW-0515">Mutator protein</keyword>
<keyword id="KW-0548">Nucleotidyltransferase</keyword>
<keyword id="KW-0539">Nucleus</keyword>
<keyword id="KW-1185">Reference proteome</keyword>
<keyword id="KW-0808">Transferase</keyword>
<keyword id="KW-0862">Zinc</keyword>
<keyword id="KW-0863">Zinc-finger</keyword>
<accession>Q6JDV7</accession>
<accession>A0A1P8ANH5</accession>
<accession>Q56YN7</accession>
<accession>Q9LPM1</accession>
<feature type="chain" id="PRO_0000441249" description="DNA polymerase kappa">
    <location>
        <begin position="1"/>
        <end position="671"/>
    </location>
</feature>
<feature type="domain" description="UmuC" evidence="2">
    <location>
        <begin position="105"/>
        <end position="285"/>
    </location>
</feature>
<feature type="zinc finger region" description="UBZ3-type" evidence="4">
    <location>
        <begin position="576"/>
        <end position="613"/>
    </location>
</feature>
<feature type="region of interest" description="Disordered" evidence="5">
    <location>
        <begin position="607"/>
        <end position="671"/>
    </location>
</feature>
<feature type="short sequence motif" description="Nuclear localization signal" evidence="3">
    <location>
        <begin position="625"/>
        <end position="632"/>
    </location>
</feature>
<feature type="compositionally biased region" description="Basic and acidic residues" evidence="5">
    <location>
        <begin position="629"/>
        <end position="650"/>
    </location>
</feature>
<feature type="compositionally biased region" description="Polar residues" evidence="5">
    <location>
        <begin position="659"/>
        <end position="671"/>
    </location>
</feature>
<feature type="active site" evidence="2">
    <location>
        <position position="201"/>
    </location>
</feature>
<feature type="binding site" evidence="2">
    <location>
        <position position="109"/>
    </location>
    <ligand>
        <name>Mg(2+)</name>
        <dbReference type="ChEBI" id="CHEBI:18420"/>
    </ligand>
</feature>
<feature type="binding site" evidence="2">
    <location>
        <position position="200"/>
    </location>
    <ligand>
        <name>Mg(2+)</name>
        <dbReference type="ChEBI" id="CHEBI:18420"/>
    </ligand>
</feature>
<feature type="binding site" evidence="4">
    <location>
        <position position="583"/>
    </location>
    <ligand>
        <name>Zn(2+)</name>
        <dbReference type="ChEBI" id="CHEBI:29105"/>
    </ligand>
</feature>
<feature type="binding site" evidence="4">
    <location>
        <position position="586"/>
    </location>
    <ligand>
        <name>Zn(2+)</name>
        <dbReference type="ChEBI" id="CHEBI:29105"/>
    </ligand>
</feature>
<feature type="binding site" evidence="4">
    <location>
        <position position="601"/>
    </location>
    <ligand>
        <name>Zn(2+)</name>
        <dbReference type="ChEBI" id="CHEBI:29105"/>
    </ligand>
</feature>
<feature type="binding site" evidence="4">
    <location>
        <position position="605"/>
    </location>
    <ligand>
        <name>Zn(2+)</name>
        <dbReference type="ChEBI" id="CHEBI:29105"/>
    </ligand>
</feature>
<feature type="site" description="Substrate discrimination" evidence="2">
    <location>
        <position position="114"/>
    </location>
</feature>
<feature type="splice variant" id="VSP_059052" description="In isoform 2.">
    <location>
        <begin position="1"/>
        <end position="269"/>
    </location>
</feature>
<feature type="splice variant" id="VSP_059053" description="In isoform 3.">
    <location>
        <begin position="666"/>
        <end position="671"/>
    </location>
</feature>
<feature type="mutagenesis site" description="Loss of DNA polymerase kappa activity." evidence="6">
    <original>D</original>
    <variation>A</variation>
    <location>
        <position position="200"/>
    </location>
</feature>
<feature type="mutagenesis site" description="Loss of DNA polymerase kappa activity." evidence="6">
    <original>E</original>
    <variation>A</variation>
    <location>
        <position position="201"/>
    </location>
</feature>
<feature type="mutagenesis site" description="Increased DNA polymerase kappa activity and processivity leading to enhanced catalytic efficiency and fidelity, due to a greater ability to insert the correct nucleotide." evidence="6 7">
    <location>
        <begin position="479"/>
        <end position="671"/>
    </location>
</feature>
<proteinExistence type="evidence at protein level"/>